<reference key="1">
    <citation type="journal article" date="2005" name="Nature">
        <title>Sequencing of Aspergillus nidulans and comparative analysis with A. fumigatus and A. oryzae.</title>
        <authorList>
            <person name="Galagan J.E."/>
            <person name="Calvo S.E."/>
            <person name="Cuomo C."/>
            <person name="Ma L.-J."/>
            <person name="Wortman J.R."/>
            <person name="Batzoglou S."/>
            <person name="Lee S.-I."/>
            <person name="Bastuerkmen M."/>
            <person name="Spevak C.C."/>
            <person name="Clutterbuck J."/>
            <person name="Kapitonov V."/>
            <person name="Jurka J."/>
            <person name="Scazzocchio C."/>
            <person name="Farman M.L."/>
            <person name="Butler J."/>
            <person name="Purcell S."/>
            <person name="Harris S."/>
            <person name="Braus G.H."/>
            <person name="Draht O."/>
            <person name="Busch S."/>
            <person name="D'Enfert C."/>
            <person name="Bouchier C."/>
            <person name="Goldman G.H."/>
            <person name="Bell-Pedersen D."/>
            <person name="Griffiths-Jones S."/>
            <person name="Doonan J.H."/>
            <person name="Yu J."/>
            <person name="Vienken K."/>
            <person name="Pain A."/>
            <person name="Freitag M."/>
            <person name="Selker E.U."/>
            <person name="Archer D.B."/>
            <person name="Penalva M.A."/>
            <person name="Oakley B.R."/>
            <person name="Momany M."/>
            <person name="Tanaka T."/>
            <person name="Kumagai T."/>
            <person name="Asai K."/>
            <person name="Machida M."/>
            <person name="Nierman W.C."/>
            <person name="Denning D.W."/>
            <person name="Caddick M.X."/>
            <person name="Hynes M."/>
            <person name="Paoletti M."/>
            <person name="Fischer R."/>
            <person name="Miller B.L."/>
            <person name="Dyer P.S."/>
            <person name="Sachs M.S."/>
            <person name="Osmani S.A."/>
            <person name="Birren B.W."/>
        </authorList>
    </citation>
    <scope>NUCLEOTIDE SEQUENCE [LARGE SCALE GENOMIC DNA]</scope>
    <source>
        <strain>FGSC A4 / ATCC 38163 / CBS 112.46 / NRRL 194 / M139</strain>
    </source>
</reference>
<reference key="2">
    <citation type="journal article" date="2009" name="Fungal Genet. Biol.">
        <title>The 2008 update of the Aspergillus nidulans genome annotation: a community effort.</title>
        <authorList>
            <person name="Wortman J.R."/>
            <person name="Gilsenan J.M."/>
            <person name="Joardar V."/>
            <person name="Deegan J."/>
            <person name="Clutterbuck J."/>
            <person name="Andersen M.R."/>
            <person name="Archer D."/>
            <person name="Bencina M."/>
            <person name="Braus G."/>
            <person name="Coutinho P."/>
            <person name="von Dohren H."/>
            <person name="Doonan J."/>
            <person name="Driessen A.J."/>
            <person name="Durek P."/>
            <person name="Espeso E."/>
            <person name="Fekete E."/>
            <person name="Flipphi M."/>
            <person name="Estrada C.G."/>
            <person name="Geysens S."/>
            <person name="Goldman G."/>
            <person name="de Groot P.W."/>
            <person name="Hansen K."/>
            <person name="Harris S.D."/>
            <person name="Heinekamp T."/>
            <person name="Helmstaedt K."/>
            <person name="Henrissat B."/>
            <person name="Hofmann G."/>
            <person name="Homan T."/>
            <person name="Horio T."/>
            <person name="Horiuchi H."/>
            <person name="James S."/>
            <person name="Jones M."/>
            <person name="Karaffa L."/>
            <person name="Karanyi Z."/>
            <person name="Kato M."/>
            <person name="Keller N."/>
            <person name="Kelly D.E."/>
            <person name="Kiel J.A."/>
            <person name="Kim J.M."/>
            <person name="van der Klei I.J."/>
            <person name="Klis F.M."/>
            <person name="Kovalchuk A."/>
            <person name="Krasevec N."/>
            <person name="Kubicek C.P."/>
            <person name="Liu B."/>
            <person name="Maccabe A."/>
            <person name="Meyer V."/>
            <person name="Mirabito P."/>
            <person name="Miskei M."/>
            <person name="Mos M."/>
            <person name="Mullins J."/>
            <person name="Nelson D.R."/>
            <person name="Nielsen J."/>
            <person name="Oakley B.R."/>
            <person name="Osmani S.A."/>
            <person name="Pakula T."/>
            <person name="Paszewski A."/>
            <person name="Paulsen I."/>
            <person name="Pilsyk S."/>
            <person name="Pocsi I."/>
            <person name="Punt P.J."/>
            <person name="Ram A.F."/>
            <person name="Ren Q."/>
            <person name="Robellet X."/>
            <person name="Robson G."/>
            <person name="Seiboth B."/>
            <person name="van Solingen P."/>
            <person name="Specht T."/>
            <person name="Sun J."/>
            <person name="Taheri-Talesh N."/>
            <person name="Takeshita N."/>
            <person name="Ussery D."/>
            <person name="vanKuyk P.A."/>
            <person name="Visser H."/>
            <person name="van de Vondervoort P.J."/>
            <person name="de Vries R.P."/>
            <person name="Walton J."/>
            <person name="Xiang X."/>
            <person name="Xiong Y."/>
            <person name="Zeng A.P."/>
            <person name="Brandt B.W."/>
            <person name="Cornell M.J."/>
            <person name="van den Hondel C.A."/>
            <person name="Visser J."/>
            <person name="Oliver S.G."/>
            <person name="Turner G."/>
        </authorList>
    </citation>
    <scope>GENOME REANNOTATION</scope>
    <source>
        <strain>FGSC A4 / ATCC 38163 / CBS 112.46 / NRRL 194 / M139</strain>
    </source>
</reference>
<reference key="3">
    <citation type="journal article" date="2007" name="Fungal Genet. Biol.">
        <title>Proteome map of Aspergillus nidulans during osmoadaptation.</title>
        <authorList>
            <person name="Kim Y."/>
            <person name="Nandakumar M.P."/>
            <person name="Marten M.R."/>
        </authorList>
    </citation>
    <scope>INDUCTION</scope>
    <scope>IDENTIFICATION BY MASS SPECTROMETRY</scope>
</reference>
<sequence length="309" mass="32314">MANRPLVPGVYVPTVAFFAENEDVDVATVEKHAAYLAKSGVAGIVVQGSNGEAVHLDREERNLITSATRHALDSVGATSMPVIVGTGAPSTRETINLCKDAAAAGGDYVLVLPPSYYKSLVSSAALLDHFRAVADASPIPVLIYNFPGASAGLDLSSDDILALSSHPNIIGTKLTCGNTGKLTRIVAQAGPSFLTFGGSCDFTLQTLIGGGAGVIAGTANIIPRACVRIMELYRAGRVEEAQKVQAIVARADWLAIKGGFVAVKSALQSYRGYGQQPRRPCVAPSSEEAAALKEAFSESIELERQLESQ</sequence>
<protein>
    <recommendedName>
        <fullName>Probable 4-hydroxy-2-oxoglutarate aldolase, mitochondrial</fullName>
        <ecNumber>4.1.3.16</ecNumber>
    </recommendedName>
    <alternativeName>
        <fullName>Dihydrodipicolinate synthase-like</fullName>
        <shortName>DHDPS-like protein</shortName>
    </alternativeName>
    <alternativeName>
        <fullName>Probable 2-keto-4-hydroxyglutarate aldolase</fullName>
        <shortName>Probable KHG-aldolase</shortName>
    </alternativeName>
</protein>
<gene>
    <name type="ORF">AN1503</name>
</gene>
<name>HOGA1_EMENI</name>
<comment type="function">
    <text evidence="1">Catalyzes the final step in the metabolic pathway of hydroxyproline (By similarity). Involved in osmoadaptation.</text>
</comment>
<comment type="catalytic activity">
    <reaction>
        <text>(4S)-4-hydroxy-2-oxoglutarate = glyoxylate + pyruvate</text>
        <dbReference type="Rhea" id="RHEA:35639"/>
        <dbReference type="ChEBI" id="CHEBI:15361"/>
        <dbReference type="ChEBI" id="CHEBI:36655"/>
        <dbReference type="ChEBI" id="CHEBI:71685"/>
        <dbReference type="EC" id="4.1.3.16"/>
    </reaction>
</comment>
<comment type="catalytic activity">
    <reaction>
        <text>(4R)-4-hydroxy-2-oxoglutarate = glyoxylate + pyruvate</text>
        <dbReference type="Rhea" id="RHEA:30687"/>
        <dbReference type="ChEBI" id="CHEBI:15361"/>
        <dbReference type="ChEBI" id="CHEBI:36655"/>
        <dbReference type="ChEBI" id="CHEBI:62213"/>
        <dbReference type="EC" id="4.1.3.16"/>
    </reaction>
</comment>
<comment type="activity regulation">
    <text evidence="1">Inhibited by divalent cations.</text>
</comment>
<comment type="induction">
    <text evidence="2">Down-regulated when grown with elevated levels of potassium chloride.</text>
</comment>
<comment type="similarity">
    <text evidence="3">Belongs to the DapA family.</text>
</comment>
<organism>
    <name type="scientific">Emericella nidulans (strain FGSC A4 / ATCC 38163 / CBS 112.46 / NRRL 194 / M139)</name>
    <name type="common">Aspergillus nidulans</name>
    <dbReference type="NCBI Taxonomy" id="227321"/>
    <lineage>
        <taxon>Eukaryota</taxon>
        <taxon>Fungi</taxon>
        <taxon>Dikarya</taxon>
        <taxon>Ascomycota</taxon>
        <taxon>Pezizomycotina</taxon>
        <taxon>Eurotiomycetes</taxon>
        <taxon>Eurotiomycetidae</taxon>
        <taxon>Eurotiales</taxon>
        <taxon>Aspergillaceae</taxon>
        <taxon>Aspergillus</taxon>
        <taxon>Aspergillus subgen. Nidulantes</taxon>
    </lineage>
</organism>
<feature type="chain" id="PRO_0000348285" description="Probable 4-hydroxy-2-oxoglutarate aldolase, mitochondrial">
    <location>
        <begin position="1"/>
        <end position="309"/>
    </location>
</feature>
<feature type="active site" description="Schiff-base intermediate with substrate" evidence="1">
    <location>
        <position position="173"/>
    </location>
</feature>
<feature type="binding site" evidence="1">
    <location>
        <begin position="49"/>
        <end position="50"/>
    </location>
    <ligand>
        <name>substrate</name>
    </ligand>
</feature>
<feature type="site" description="Involved in proton transfer during cleavage" evidence="1">
    <location>
        <position position="144"/>
    </location>
</feature>
<keyword id="KW-0456">Lyase</keyword>
<keyword id="KW-1185">Reference proteome</keyword>
<keyword id="KW-0704">Schiff base</keyword>
<keyword id="KW-0346">Stress response</keyword>
<dbReference type="EC" id="4.1.3.16"/>
<dbReference type="EMBL" id="AACD01000023">
    <property type="protein sequence ID" value="EAA63816.1"/>
    <property type="molecule type" value="Genomic_DNA"/>
</dbReference>
<dbReference type="EMBL" id="BN001307">
    <property type="protein sequence ID" value="CBF84998.1"/>
    <property type="molecule type" value="Genomic_DNA"/>
</dbReference>
<dbReference type="RefSeq" id="XP_659107.1">
    <property type="nucleotide sequence ID" value="XM_654015.1"/>
</dbReference>
<dbReference type="SMR" id="Q5BD77"/>
<dbReference type="STRING" id="227321.Q5BD77"/>
<dbReference type="EnsemblFungi" id="CBF84998">
    <property type="protein sequence ID" value="CBF84998"/>
    <property type="gene ID" value="ANIA_01503"/>
</dbReference>
<dbReference type="KEGG" id="ani:ANIA_01503"/>
<dbReference type="eggNOG" id="ENOG502QWNS">
    <property type="taxonomic scope" value="Eukaryota"/>
</dbReference>
<dbReference type="HOGENOM" id="CLU_049343_0_2_1"/>
<dbReference type="InParanoid" id="Q5BD77"/>
<dbReference type="OMA" id="GMDACVP"/>
<dbReference type="OrthoDB" id="191315at2759"/>
<dbReference type="Proteomes" id="UP000000560">
    <property type="component" value="Chromosome VII"/>
</dbReference>
<dbReference type="GO" id="GO:0106009">
    <property type="term" value="F:(4S)-4-hydroxy-2-oxoglutarate aldolase activity"/>
    <property type="evidence" value="ECO:0007669"/>
    <property type="project" value="RHEA"/>
</dbReference>
<dbReference type="GO" id="GO:0008700">
    <property type="term" value="F:(R,S)-4-hydroxy-2-oxoglutarate aldolase activity"/>
    <property type="evidence" value="ECO:0007669"/>
    <property type="project" value="UniProtKB-EC"/>
</dbReference>
<dbReference type="GO" id="GO:0008840">
    <property type="term" value="F:4-hydroxy-tetrahydrodipicolinate synthase activity"/>
    <property type="evidence" value="ECO:0000318"/>
    <property type="project" value="GO_Central"/>
</dbReference>
<dbReference type="CDD" id="cd00408">
    <property type="entry name" value="DHDPS-like"/>
    <property type="match status" value="1"/>
</dbReference>
<dbReference type="Gene3D" id="3.20.20.70">
    <property type="entry name" value="Aldolase class I"/>
    <property type="match status" value="1"/>
</dbReference>
<dbReference type="InterPro" id="IPR013785">
    <property type="entry name" value="Aldolase_TIM"/>
</dbReference>
<dbReference type="InterPro" id="IPR002220">
    <property type="entry name" value="DapA-like"/>
</dbReference>
<dbReference type="PANTHER" id="PTHR12128:SF52">
    <property type="entry name" value="4-HYDROXY-2-OXOGLUTARATE ALDOLASE, MITOCHONDRIAL-RELATED"/>
    <property type="match status" value="1"/>
</dbReference>
<dbReference type="PANTHER" id="PTHR12128">
    <property type="entry name" value="DIHYDRODIPICOLINATE SYNTHASE"/>
    <property type="match status" value="1"/>
</dbReference>
<dbReference type="Pfam" id="PF00701">
    <property type="entry name" value="DHDPS"/>
    <property type="match status" value="1"/>
</dbReference>
<dbReference type="PIRSF" id="PIRSF001365">
    <property type="entry name" value="DHDPS"/>
    <property type="match status" value="1"/>
</dbReference>
<dbReference type="PRINTS" id="PR00146">
    <property type="entry name" value="DHPICSNTHASE"/>
</dbReference>
<dbReference type="SMART" id="SM01130">
    <property type="entry name" value="DHDPS"/>
    <property type="match status" value="1"/>
</dbReference>
<dbReference type="SUPFAM" id="SSF51569">
    <property type="entry name" value="Aldolase"/>
    <property type="match status" value="1"/>
</dbReference>
<accession>Q5BD77</accession>
<accession>C8VMN4</accession>
<proteinExistence type="evidence at protein level"/>
<evidence type="ECO:0000250" key="1"/>
<evidence type="ECO:0000269" key="2">
    <source>
    </source>
</evidence>
<evidence type="ECO:0000305" key="3"/>